<evidence type="ECO:0000250" key="1"/>
<evidence type="ECO:0000250" key="2">
    <source>
        <dbReference type="UniProtKB" id="Q9JK37"/>
    </source>
</evidence>
<evidence type="ECO:0000256" key="3">
    <source>
        <dbReference type="SAM" id="MobiDB-lite"/>
    </source>
</evidence>
<evidence type="ECO:0000305" key="4"/>
<dbReference type="EMBL" id="DQ143040">
    <property type="protein sequence ID" value="ABA12602.1"/>
    <property type="molecule type" value="mRNA"/>
</dbReference>
<dbReference type="EMBL" id="DQ143042">
    <property type="protein sequence ID" value="ABA12604.1"/>
    <property type="molecule type" value="Genomic_DNA"/>
</dbReference>
<dbReference type="EMBL" id="DQ058294">
    <property type="protein sequence ID" value="AAY78933.1"/>
    <property type="molecule type" value="mRNA"/>
</dbReference>
<dbReference type="RefSeq" id="NP_001020393.1">
    <property type="nucleotide sequence ID" value="NM_001025222.2"/>
</dbReference>
<dbReference type="RefSeq" id="XP_005671146.1">
    <property type="nucleotide sequence ID" value="XM_005671089.2"/>
</dbReference>
<dbReference type="RefSeq" id="XP_020927838.1">
    <property type="nucleotide sequence ID" value="XM_021072179.1"/>
</dbReference>
<dbReference type="FunCoup" id="Q4PS85">
    <property type="interactions" value="31"/>
</dbReference>
<dbReference type="STRING" id="9823.ENSSSCP00000010985"/>
<dbReference type="GlyGen" id="Q4PS85">
    <property type="glycosylation" value="1 site"/>
</dbReference>
<dbReference type="PaxDb" id="9823-ENSSSCP00000010985"/>
<dbReference type="PeptideAtlas" id="Q4PS85"/>
<dbReference type="Ensembl" id="ENSSSCT00000011277.5">
    <property type="protein sequence ID" value="ENSSSCP00000010985.5"/>
    <property type="gene ID" value="ENSSSCG00000010304.5"/>
</dbReference>
<dbReference type="Ensembl" id="ENSSSCT00015107000.1">
    <property type="protein sequence ID" value="ENSSSCP00015045121.1"/>
    <property type="gene ID" value="ENSSSCG00015078943.1"/>
</dbReference>
<dbReference type="Ensembl" id="ENSSSCT00025045717.1">
    <property type="protein sequence ID" value="ENSSSCP00025019502.1"/>
    <property type="gene ID" value="ENSSSCG00025033590.1"/>
</dbReference>
<dbReference type="Ensembl" id="ENSSSCT00030104559.1">
    <property type="protein sequence ID" value="ENSSSCP00030048511.1"/>
    <property type="gene ID" value="ENSSSCG00030074487.1"/>
</dbReference>
<dbReference type="Ensembl" id="ENSSSCT00035097705.1">
    <property type="protein sequence ID" value="ENSSSCP00035041237.1"/>
    <property type="gene ID" value="ENSSSCG00035072203.1"/>
</dbReference>
<dbReference type="Ensembl" id="ENSSSCT00040005665.1">
    <property type="protein sequence ID" value="ENSSSCP00040002149.1"/>
    <property type="gene ID" value="ENSSSCG00040004299.1"/>
</dbReference>
<dbReference type="Ensembl" id="ENSSSCT00045019062.1">
    <property type="protein sequence ID" value="ENSSSCP00045013083.1"/>
    <property type="gene ID" value="ENSSSCG00045011230.1"/>
</dbReference>
<dbReference type="Ensembl" id="ENSSSCT00050055000.1">
    <property type="protein sequence ID" value="ENSSSCP00050023260.1"/>
    <property type="gene ID" value="ENSSSCG00050040637.1"/>
</dbReference>
<dbReference type="Ensembl" id="ENSSSCT00055053130.1">
    <property type="protein sequence ID" value="ENSSSCP00055042397.1"/>
    <property type="gene ID" value="ENSSSCG00055026866.1"/>
</dbReference>
<dbReference type="Ensembl" id="ENSSSCT00060101147.1">
    <property type="protein sequence ID" value="ENSSSCP00060043941.1"/>
    <property type="gene ID" value="ENSSSCG00060073956.1"/>
</dbReference>
<dbReference type="Ensembl" id="ENSSSCT00065007083.1">
    <property type="protein sequence ID" value="ENSSSCP00065003059.1"/>
    <property type="gene ID" value="ENSSSCG00065005213.1"/>
</dbReference>
<dbReference type="Ensembl" id="ENSSSCT00070010852.1">
    <property type="protein sequence ID" value="ENSSSCP00070008935.1"/>
    <property type="gene ID" value="ENSSSCG00070005711.1"/>
</dbReference>
<dbReference type="Ensembl" id="ENSSSCT00090030105">
    <property type="protein sequence ID" value="ENSSSCP00090018760"/>
    <property type="gene ID" value="ENSSSCG00090017024"/>
</dbReference>
<dbReference type="Ensembl" id="ENSSSCT00105072001">
    <property type="protein sequence ID" value="ENSSSCP00105051014"/>
    <property type="gene ID" value="ENSSSCG00105037739"/>
</dbReference>
<dbReference type="Ensembl" id="ENSSSCT00110021036">
    <property type="protein sequence ID" value="ENSSSCP00110014207"/>
    <property type="gene ID" value="ENSSSCG00110010960"/>
</dbReference>
<dbReference type="Ensembl" id="ENSSSCT00115037599">
    <property type="protein sequence ID" value="ENSSSCP00115035528"/>
    <property type="gene ID" value="ENSSSCG00115021218"/>
</dbReference>
<dbReference type="Ensembl" id="ENSSSCT00130019600">
    <property type="protein sequence ID" value="ENSSSCP00130013426"/>
    <property type="gene ID" value="ENSSSCG00130010369"/>
</dbReference>
<dbReference type="GeneID" id="574060"/>
<dbReference type="KEGG" id="ssc:574060"/>
<dbReference type="CTD" id="58529"/>
<dbReference type="VGNC" id="VGNC:90542">
    <property type="gene designation" value="MYOZ1"/>
</dbReference>
<dbReference type="eggNOG" id="ENOG502R4N9">
    <property type="taxonomic scope" value="Eukaryota"/>
</dbReference>
<dbReference type="GeneTree" id="ENSGT00950000183027"/>
<dbReference type="HOGENOM" id="CLU_071316_0_0_1"/>
<dbReference type="InParanoid" id="Q4PS85"/>
<dbReference type="OrthoDB" id="9901707at2759"/>
<dbReference type="TreeFam" id="TF331748"/>
<dbReference type="Proteomes" id="UP000008227">
    <property type="component" value="Chromosome 14"/>
</dbReference>
<dbReference type="Proteomes" id="UP000314985">
    <property type="component" value="Chromosome 14"/>
</dbReference>
<dbReference type="Proteomes" id="UP000694570">
    <property type="component" value="Unplaced"/>
</dbReference>
<dbReference type="Proteomes" id="UP000694571">
    <property type="component" value="Unplaced"/>
</dbReference>
<dbReference type="Proteomes" id="UP000694720">
    <property type="component" value="Unplaced"/>
</dbReference>
<dbReference type="Proteomes" id="UP000694722">
    <property type="component" value="Unplaced"/>
</dbReference>
<dbReference type="Proteomes" id="UP000694723">
    <property type="component" value="Unplaced"/>
</dbReference>
<dbReference type="Proteomes" id="UP000694724">
    <property type="component" value="Unplaced"/>
</dbReference>
<dbReference type="Proteomes" id="UP000694725">
    <property type="component" value="Unplaced"/>
</dbReference>
<dbReference type="Proteomes" id="UP000694726">
    <property type="component" value="Unplaced"/>
</dbReference>
<dbReference type="Proteomes" id="UP000694727">
    <property type="component" value="Unplaced"/>
</dbReference>
<dbReference type="Proteomes" id="UP000694728">
    <property type="component" value="Unplaced"/>
</dbReference>
<dbReference type="GO" id="GO:0015629">
    <property type="term" value="C:actin cytoskeleton"/>
    <property type="evidence" value="ECO:0007669"/>
    <property type="project" value="Ensembl"/>
</dbReference>
<dbReference type="GO" id="GO:0005634">
    <property type="term" value="C:nucleus"/>
    <property type="evidence" value="ECO:0007669"/>
    <property type="project" value="UniProtKB-SubCell"/>
</dbReference>
<dbReference type="GO" id="GO:0031143">
    <property type="term" value="C:pseudopodium"/>
    <property type="evidence" value="ECO:0007669"/>
    <property type="project" value="UniProtKB-SubCell"/>
</dbReference>
<dbReference type="GO" id="GO:0030018">
    <property type="term" value="C:Z disc"/>
    <property type="evidence" value="ECO:0007669"/>
    <property type="project" value="InterPro"/>
</dbReference>
<dbReference type="GO" id="GO:0042805">
    <property type="term" value="F:actinin binding"/>
    <property type="evidence" value="ECO:0007669"/>
    <property type="project" value="Ensembl"/>
</dbReference>
<dbReference type="GO" id="GO:0051373">
    <property type="term" value="F:FATZ binding"/>
    <property type="evidence" value="ECO:0007669"/>
    <property type="project" value="Ensembl"/>
</dbReference>
<dbReference type="GO" id="GO:0140693">
    <property type="term" value="F:molecular condensate scaffold activity"/>
    <property type="evidence" value="ECO:0007669"/>
    <property type="project" value="Ensembl"/>
</dbReference>
<dbReference type="GO" id="GO:0004865">
    <property type="term" value="F:protein serine/threonine phosphatase inhibitor activity"/>
    <property type="evidence" value="ECO:0007669"/>
    <property type="project" value="Ensembl"/>
</dbReference>
<dbReference type="GO" id="GO:0070885">
    <property type="term" value="P:negative regulation of calcineurin-NFAT signaling cascade"/>
    <property type="evidence" value="ECO:0007669"/>
    <property type="project" value="Ensembl"/>
</dbReference>
<dbReference type="GO" id="GO:0043417">
    <property type="term" value="P:negative regulation of skeletal muscle tissue regeneration"/>
    <property type="evidence" value="ECO:0007669"/>
    <property type="project" value="Ensembl"/>
</dbReference>
<dbReference type="GO" id="GO:0000122">
    <property type="term" value="P:negative regulation of transcription by RNA polymerase II"/>
    <property type="evidence" value="ECO:0007669"/>
    <property type="project" value="Ensembl"/>
</dbReference>
<dbReference type="GO" id="GO:0045214">
    <property type="term" value="P:sarcomere organization"/>
    <property type="evidence" value="ECO:0007669"/>
    <property type="project" value="Ensembl"/>
</dbReference>
<dbReference type="GO" id="GO:0043503">
    <property type="term" value="P:skeletal muscle fiber adaptation"/>
    <property type="evidence" value="ECO:0007669"/>
    <property type="project" value="Ensembl"/>
</dbReference>
<dbReference type="GO" id="GO:0007519">
    <property type="term" value="P:skeletal muscle tissue development"/>
    <property type="evidence" value="ECO:0007669"/>
    <property type="project" value="Ensembl"/>
</dbReference>
<dbReference type="GO" id="GO:0042060">
    <property type="term" value="P:wound healing"/>
    <property type="evidence" value="ECO:0007669"/>
    <property type="project" value="Ensembl"/>
</dbReference>
<dbReference type="InterPro" id="IPR008438">
    <property type="entry name" value="MYOZ"/>
</dbReference>
<dbReference type="PANTHER" id="PTHR15941">
    <property type="entry name" value="MYOZENIN"/>
    <property type="match status" value="1"/>
</dbReference>
<dbReference type="PANTHER" id="PTHR15941:SF11">
    <property type="entry name" value="MYOZENIN-1"/>
    <property type="match status" value="1"/>
</dbReference>
<dbReference type="Pfam" id="PF05556">
    <property type="entry name" value="Calsarcin"/>
    <property type="match status" value="1"/>
</dbReference>
<organism>
    <name type="scientific">Sus scrofa</name>
    <name type="common">Pig</name>
    <dbReference type="NCBI Taxonomy" id="9823"/>
    <lineage>
        <taxon>Eukaryota</taxon>
        <taxon>Metazoa</taxon>
        <taxon>Chordata</taxon>
        <taxon>Craniata</taxon>
        <taxon>Vertebrata</taxon>
        <taxon>Euteleostomi</taxon>
        <taxon>Mammalia</taxon>
        <taxon>Eutheria</taxon>
        <taxon>Laurasiatheria</taxon>
        <taxon>Artiodactyla</taxon>
        <taxon>Suina</taxon>
        <taxon>Suidae</taxon>
        <taxon>Sus</taxon>
    </lineage>
</organism>
<accession>Q4PS85</accession>
<accession>Q1AG04</accession>
<protein>
    <recommendedName>
        <fullName>Myozenin-1</fullName>
    </recommendedName>
    <alternativeName>
        <fullName>Calcineurin-interacting protein 2</fullName>
    </alternativeName>
    <alternativeName>
        <fullName>Calsarcin-2</fullName>
    </alternativeName>
</protein>
<name>MYOZ1_PIG</name>
<gene>
    <name type="primary">MYOZ1</name>
</gene>
<keyword id="KW-0966">Cell projection</keyword>
<keyword id="KW-0539">Nucleus</keyword>
<keyword id="KW-0597">Phosphoprotein</keyword>
<keyword id="KW-1185">Reference proteome</keyword>
<reference key="1">
    <citation type="journal article" date="2006" name="Gene">
        <title>Characterization of different expression patterns of calsarcin-1 and calsarcin-2 in porcine muscle.</title>
        <authorList>
            <person name="Wang H."/>
            <person name="Zhu Z."/>
            <person name="Wang H."/>
            <person name="Yang S."/>
            <person name="Mo D."/>
            <person name="Li K."/>
        </authorList>
    </citation>
    <scope>NUCLEOTIDE SEQUENCE [GENOMIC DNA / MRNA]</scope>
</reference>
<reference key="2">
    <citation type="submission" date="2005-05" db="EMBL/GenBank/DDBJ databases">
        <title>Cloning and sequencing of calsarcin-2 (myoz1) in skeletal muscle of pigs.</title>
        <authorList>
            <person name="Su Y."/>
            <person name="Liu D."/>
            <person name="Song H."/>
            <person name="Zeng R."/>
            <person name="Kong D."/>
            <person name="Zhu B."/>
            <person name="Ba C."/>
        </authorList>
    </citation>
    <scope>NUCLEOTIDE SEQUENCE [MRNA]</scope>
</reference>
<sequence>MPLSGTPAPNKKRKSSKLIMELTGGGQESSGLNLGKKISVPRDVMLEELSLLTNRGSKMFKLRQMRVEKFIYENHPDVFSDSSMDHFQKFLPTVGGQLGTAGQGFSYSKGSSGGQAGGSSSAGQYGSGQQHHHQGSGSGSGGAGGPGSQTGRGGDAGTTGVGETGTGDQAGGEGKHITVFKTYISPWEKAMGVDPHQKVELGIDLLAYGAKAELPQYKSFNRTAMPYGGYEKASKRMTFQMPKFDLGPLLSEPLVLYNQNLSNRPSFNRTPIPWLSSGEPVDYNVDIGIPLDGETEEL</sequence>
<comment type="function">
    <text evidence="1">Myozenins may serve as intracellular binding proteins involved in linking Z-disk proteins such as alpha-actinin, gamma-filamin, TCAP/telethonin, LDB3/ZASP and localizing calcineurin signaling to the sarcomere. Plays an important role in the modulation of calcineurin signaling. May play a role in myofibrillogenesis (By similarity).</text>
</comment>
<comment type="subunit">
    <text evidence="1">Interacts with ACTN2, ACTN3, FLNA, FLNB, FLNC, LDB3, PPP3CA and TCAP. Interacts via its C-terminal region with MYOT (By similarity).</text>
</comment>
<comment type="subcellular location">
    <subcellularLocation>
        <location evidence="1">Nucleus</location>
    </subcellularLocation>
    <subcellularLocation>
        <location evidence="1">Cell projection</location>
        <location evidence="1">Pseudopodium</location>
    </subcellularLocation>
    <text evidence="1">Localized to the nucleus and pseudopodia of undifferentiated cells and detected throughout the myotubes of differentiated cells. Colocalizes with ACTN2, FLNC and MYOT at the Z-lines of skeletal muscle (By similarity).</text>
</comment>
<comment type="similarity">
    <text evidence="4">Belongs to the myozenin family.</text>
</comment>
<proteinExistence type="evidence at transcript level"/>
<feature type="chain" id="PRO_0000111097" description="Myozenin-1">
    <location>
        <begin position="1"/>
        <end position="298"/>
    </location>
</feature>
<feature type="region of interest" description="Disordered" evidence="3">
    <location>
        <begin position="1"/>
        <end position="34"/>
    </location>
</feature>
<feature type="region of interest" description="Disordered" evidence="3">
    <location>
        <begin position="105"/>
        <end position="173"/>
    </location>
</feature>
<feature type="compositionally biased region" description="Low complexity" evidence="3">
    <location>
        <begin position="118"/>
        <end position="129"/>
    </location>
</feature>
<feature type="compositionally biased region" description="Gly residues" evidence="3">
    <location>
        <begin position="136"/>
        <end position="172"/>
    </location>
</feature>
<feature type="modified residue" description="Phosphoserine" evidence="2">
    <location>
        <position position="82"/>
    </location>
</feature>